<protein>
    <recommendedName>
        <fullName evidence="1">Large ribosomal subunit protein uL16</fullName>
    </recommendedName>
    <alternativeName>
        <fullName evidence="2">50S ribosomal protein L10e</fullName>
    </alternativeName>
</protein>
<sequence>MPARPARCYRRIKGPPYTREEYIHGAPMIQIPKFDMGTTSAAARAAFTMVAKLVAEERGQIRMQALEAARQISSKYLTKYVGDANYYLRLNVVPHHVLRENRMLAMAGADRLQEGMRLAFGSPAGRAARVEPGQVIFYVEFKPEHLAHVKEALRRAASKLPIPTRIVVEPKGDGKTAS</sequence>
<reference key="1">
    <citation type="submission" date="2007-02" db="EMBL/GenBank/DDBJ databases">
        <title>Complete sequence of Pyrobaculum calidifontis JCM 11548.</title>
        <authorList>
            <consortium name="US DOE Joint Genome Institute"/>
            <person name="Copeland A."/>
            <person name="Lucas S."/>
            <person name="Lapidus A."/>
            <person name="Barry K."/>
            <person name="Glavina del Rio T."/>
            <person name="Dalin E."/>
            <person name="Tice H."/>
            <person name="Pitluck S."/>
            <person name="Chain P."/>
            <person name="Malfatti S."/>
            <person name="Shin M."/>
            <person name="Vergez L."/>
            <person name="Schmutz J."/>
            <person name="Larimer F."/>
            <person name="Land M."/>
            <person name="Hauser L."/>
            <person name="Kyrpides N."/>
            <person name="Mikhailova N."/>
            <person name="Cozen A.E."/>
            <person name="Fitz-Gibbon S.T."/>
            <person name="House C.H."/>
            <person name="Saltikov C."/>
            <person name="Lowe T.M."/>
            <person name="Richardson P."/>
        </authorList>
    </citation>
    <scope>NUCLEOTIDE SEQUENCE [LARGE SCALE GENOMIC DNA]</scope>
    <source>
        <strain>DSM 21063 / JCM 11548 / VA1</strain>
    </source>
</reference>
<keyword id="KW-0002">3D-structure</keyword>
<keyword id="KW-0687">Ribonucleoprotein</keyword>
<keyword id="KW-0689">Ribosomal protein</keyword>
<proteinExistence type="evidence at protein level"/>
<accession>A3MXP3</accession>
<comment type="similarity">
    <text evidence="1">Belongs to the universal ribosomal protein uL16 family.</text>
</comment>
<organism>
    <name type="scientific">Pyrobaculum calidifontis (strain DSM 21063 / JCM 11548 / VA1)</name>
    <dbReference type="NCBI Taxonomy" id="410359"/>
    <lineage>
        <taxon>Archaea</taxon>
        <taxon>Thermoproteota</taxon>
        <taxon>Thermoprotei</taxon>
        <taxon>Thermoproteales</taxon>
        <taxon>Thermoproteaceae</taxon>
        <taxon>Pyrobaculum</taxon>
    </lineage>
</organism>
<gene>
    <name evidence="1" type="primary">rpl10e</name>
    <name type="ordered locus">Pcal_1995</name>
</gene>
<feature type="chain" id="PRO_1000026195" description="Large ribosomal subunit protein uL16">
    <location>
        <begin position="1"/>
        <end position="178"/>
    </location>
</feature>
<evidence type="ECO:0000255" key="1">
    <source>
        <dbReference type="HAMAP-Rule" id="MF_00448"/>
    </source>
</evidence>
<evidence type="ECO:0000305" key="2"/>
<dbReference type="EMBL" id="CP000561">
    <property type="protein sequence ID" value="ABO09410.1"/>
    <property type="molecule type" value="Genomic_DNA"/>
</dbReference>
<dbReference type="RefSeq" id="WP_011850668.1">
    <property type="nucleotide sequence ID" value="NC_009073.1"/>
</dbReference>
<dbReference type="PDB" id="9E6Q">
    <property type="method" value="EM"/>
    <property type="resolution" value="1.95 A"/>
    <property type="chains" value="AN=1-178"/>
</dbReference>
<dbReference type="PDB" id="9E71">
    <property type="method" value="EM"/>
    <property type="resolution" value="2.36 A"/>
    <property type="chains" value="AN=1-178"/>
</dbReference>
<dbReference type="PDB" id="9E7F">
    <property type="method" value="EM"/>
    <property type="resolution" value="2.53 A"/>
    <property type="chains" value="AN=1-178"/>
</dbReference>
<dbReference type="PDBsum" id="9E6Q"/>
<dbReference type="PDBsum" id="9E71"/>
<dbReference type="PDBsum" id="9E7F"/>
<dbReference type="EMDB" id="EMD-47578"/>
<dbReference type="EMDB" id="EMD-47628"/>
<dbReference type="EMDB" id="EMD-47668"/>
<dbReference type="SMR" id="A3MXP3"/>
<dbReference type="STRING" id="410359.Pcal_1995"/>
<dbReference type="GeneID" id="4908957"/>
<dbReference type="KEGG" id="pcl:Pcal_1995"/>
<dbReference type="eggNOG" id="arCOG04113">
    <property type="taxonomic scope" value="Archaea"/>
</dbReference>
<dbReference type="HOGENOM" id="CLU_084051_0_2_2"/>
<dbReference type="OrthoDB" id="30538at2157"/>
<dbReference type="Proteomes" id="UP000001431">
    <property type="component" value="Chromosome"/>
</dbReference>
<dbReference type="GO" id="GO:1990904">
    <property type="term" value="C:ribonucleoprotein complex"/>
    <property type="evidence" value="ECO:0007669"/>
    <property type="project" value="UniProtKB-KW"/>
</dbReference>
<dbReference type="GO" id="GO:0005840">
    <property type="term" value="C:ribosome"/>
    <property type="evidence" value="ECO:0007669"/>
    <property type="project" value="UniProtKB-KW"/>
</dbReference>
<dbReference type="GO" id="GO:0003735">
    <property type="term" value="F:structural constituent of ribosome"/>
    <property type="evidence" value="ECO:0007669"/>
    <property type="project" value="InterPro"/>
</dbReference>
<dbReference type="GO" id="GO:0006412">
    <property type="term" value="P:translation"/>
    <property type="evidence" value="ECO:0007669"/>
    <property type="project" value="UniProtKB-UniRule"/>
</dbReference>
<dbReference type="CDD" id="cd01433">
    <property type="entry name" value="Ribosomal_L16_L10e"/>
    <property type="match status" value="1"/>
</dbReference>
<dbReference type="FunFam" id="3.90.1170.10:FF:000008">
    <property type="entry name" value="50S ribosomal protein L10e"/>
    <property type="match status" value="1"/>
</dbReference>
<dbReference type="Gene3D" id="3.90.1170.10">
    <property type="entry name" value="Ribosomal protein L10e/L16"/>
    <property type="match status" value="1"/>
</dbReference>
<dbReference type="HAMAP" id="MF_00448">
    <property type="entry name" value="Ribosomal_uL16_arch"/>
    <property type="match status" value="1"/>
</dbReference>
<dbReference type="InterPro" id="IPR047873">
    <property type="entry name" value="Ribosomal_uL16"/>
</dbReference>
<dbReference type="InterPro" id="IPR022981">
    <property type="entry name" value="Ribosomal_uL16_arc"/>
</dbReference>
<dbReference type="InterPro" id="IPR018255">
    <property type="entry name" value="Ribosomal_uL16_CS_euk_arc"/>
</dbReference>
<dbReference type="InterPro" id="IPR016180">
    <property type="entry name" value="Ribosomal_uL16_dom"/>
</dbReference>
<dbReference type="InterPro" id="IPR001197">
    <property type="entry name" value="Ribosomal_uL16_euk_arch"/>
</dbReference>
<dbReference type="InterPro" id="IPR036920">
    <property type="entry name" value="Ribosomal_uL16_sf"/>
</dbReference>
<dbReference type="NCBIfam" id="NF003236">
    <property type="entry name" value="PRK04199.1-1"/>
    <property type="match status" value="1"/>
</dbReference>
<dbReference type="NCBIfam" id="NF003239">
    <property type="entry name" value="PRK04199.1-4"/>
    <property type="match status" value="1"/>
</dbReference>
<dbReference type="PANTHER" id="PTHR11726">
    <property type="entry name" value="60S RIBOSOMAL PROTEIN L10"/>
    <property type="match status" value="1"/>
</dbReference>
<dbReference type="Pfam" id="PF00252">
    <property type="entry name" value="Ribosomal_L16"/>
    <property type="match status" value="1"/>
</dbReference>
<dbReference type="PIRSF" id="PIRSF005590">
    <property type="entry name" value="Ribosomal_L10"/>
    <property type="match status" value="1"/>
</dbReference>
<dbReference type="SUPFAM" id="SSF54686">
    <property type="entry name" value="Ribosomal protein L16p/L10e"/>
    <property type="match status" value="1"/>
</dbReference>
<dbReference type="PROSITE" id="PS01257">
    <property type="entry name" value="RIBOSOMAL_L10E"/>
    <property type="match status" value="1"/>
</dbReference>
<name>RL10E_PYRCJ</name>